<keyword id="KW-0963">Cytoplasm</keyword>
<keyword id="KW-0520">NAD</keyword>
<keyword id="KW-0560">Oxidoreductase</keyword>
<keyword id="KW-0664">Pyridoxine biosynthesis</keyword>
<gene>
    <name evidence="1" type="primary">epd</name>
    <name type="ordered locus">YPTB3197</name>
</gene>
<dbReference type="EC" id="1.2.1.72" evidence="1"/>
<dbReference type="EMBL" id="BX936398">
    <property type="protein sequence ID" value="CAH22435.1"/>
    <property type="molecule type" value="Genomic_DNA"/>
</dbReference>
<dbReference type="RefSeq" id="WP_002209964.1">
    <property type="nucleotide sequence ID" value="NZ_CP009712.1"/>
</dbReference>
<dbReference type="SMR" id="Q666Q0"/>
<dbReference type="GeneID" id="57973718"/>
<dbReference type="KEGG" id="ypo:BZ17_3414"/>
<dbReference type="KEGG" id="yps:YPTB3197"/>
<dbReference type="PATRIC" id="fig|273123.14.peg.3583"/>
<dbReference type="UniPathway" id="UPA00244">
    <property type="reaction ID" value="UER00309"/>
</dbReference>
<dbReference type="Proteomes" id="UP000001011">
    <property type="component" value="Chromosome"/>
</dbReference>
<dbReference type="GO" id="GO:0005737">
    <property type="term" value="C:cytoplasm"/>
    <property type="evidence" value="ECO:0007669"/>
    <property type="project" value="UniProtKB-SubCell"/>
</dbReference>
<dbReference type="GO" id="GO:0048001">
    <property type="term" value="F:erythrose-4-phosphate dehydrogenase activity"/>
    <property type="evidence" value="ECO:0007669"/>
    <property type="project" value="UniProtKB-UniRule"/>
</dbReference>
<dbReference type="GO" id="GO:0051287">
    <property type="term" value="F:NAD binding"/>
    <property type="evidence" value="ECO:0007669"/>
    <property type="project" value="InterPro"/>
</dbReference>
<dbReference type="GO" id="GO:0042823">
    <property type="term" value="P:pyridoxal phosphate biosynthetic process"/>
    <property type="evidence" value="ECO:0007669"/>
    <property type="project" value="UniProtKB-UniRule"/>
</dbReference>
<dbReference type="GO" id="GO:0008615">
    <property type="term" value="P:pyridoxine biosynthetic process"/>
    <property type="evidence" value="ECO:0007669"/>
    <property type="project" value="UniProtKB-UniRule"/>
</dbReference>
<dbReference type="CDD" id="cd23937">
    <property type="entry name" value="GAPDH_C_E4PDH"/>
    <property type="match status" value="1"/>
</dbReference>
<dbReference type="CDD" id="cd17892">
    <property type="entry name" value="GAPDH_N_E4PDH"/>
    <property type="match status" value="1"/>
</dbReference>
<dbReference type="FunFam" id="3.30.360.10:FF:000007">
    <property type="entry name" value="D-erythrose-4-phosphate dehydrogenase"/>
    <property type="match status" value="1"/>
</dbReference>
<dbReference type="FunFam" id="3.40.50.720:FF:000001">
    <property type="entry name" value="Glyceraldehyde-3-phosphate dehydrogenase"/>
    <property type="match status" value="1"/>
</dbReference>
<dbReference type="Gene3D" id="3.30.360.10">
    <property type="entry name" value="Dihydrodipicolinate Reductase, domain 2"/>
    <property type="match status" value="1"/>
</dbReference>
<dbReference type="Gene3D" id="3.40.50.720">
    <property type="entry name" value="NAD(P)-binding Rossmann-like Domain"/>
    <property type="match status" value="1"/>
</dbReference>
<dbReference type="HAMAP" id="MF_01640">
    <property type="entry name" value="E4P_dehydrog"/>
    <property type="match status" value="1"/>
</dbReference>
<dbReference type="InterPro" id="IPR006422">
    <property type="entry name" value="E4P_DH_bac"/>
</dbReference>
<dbReference type="InterPro" id="IPR020831">
    <property type="entry name" value="GlycerAld/Erythrose_P_DH"/>
</dbReference>
<dbReference type="InterPro" id="IPR020830">
    <property type="entry name" value="GlycerAld_3-P_DH_AS"/>
</dbReference>
<dbReference type="InterPro" id="IPR020829">
    <property type="entry name" value="GlycerAld_3-P_DH_cat"/>
</dbReference>
<dbReference type="InterPro" id="IPR020828">
    <property type="entry name" value="GlycerAld_3-P_DH_NAD(P)-bd"/>
</dbReference>
<dbReference type="InterPro" id="IPR036291">
    <property type="entry name" value="NAD(P)-bd_dom_sf"/>
</dbReference>
<dbReference type="NCBIfam" id="TIGR01532">
    <property type="entry name" value="E4PD_g-proteo"/>
    <property type="match status" value="1"/>
</dbReference>
<dbReference type="NCBIfam" id="NF010058">
    <property type="entry name" value="PRK13535.1"/>
    <property type="match status" value="1"/>
</dbReference>
<dbReference type="PANTHER" id="PTHR43148">
    <property type="entry name" value="GLYCERALDEHYDE-3-PHOSPHATE DEHYDROGENASE 2"/>
    <property type="match status" value="1"/>
</dbReference>
<dbReference type="Pfam" id="PF02800">
    <property type="entry name" value="Gp_dh_C"/>
    <property type="match status" value="1"/>
</dbReference>
<dbReference type="Pfam" id="PF00044">
    <property type="entry name" value="Gp_dh_N"/>
    <property type="match status" value="1"/>
</dbReference>
<dbReference type="PIRSF" id="PIRSF000149">
    <property type="entry name" value="GAP_DH"/>
    <property type="match status" value="1"/>
</dbReference>
<dbReference type="PRINTS" id="PR00078">
    <property type="entry name" value="G3PDHDRGNASE"/>
</dbReference>
<dbReference type="SMART" id="SM00846">
    <property type="entry name" value="Gp_dh_N"/>
    <property type="match status" value="1"/>
</dbReference>
<dbReference type="SUPFAM" id="SSF55347">
    <property type="entry name" value="Glyceraldehyde-3-phosphate dehydrogenase-like, C-terminal domain"/>
    <property type="match status" value="1"/>
</dbReference>
<dbReference type="SUPFAM" id="SSF51735">
    <property type="entry name" value="NAD(P)-binding Rossmann-fold domains"/>
    <property type="match status" value="1"/>
</dbReference>
<dbReference type="PROSITE" id="PS00071">
    <property type="entry name" value="GAPDH"/>
    <property type="match status" value="1"/>
</dbReference>
<accession>Q666Q0</accession>
<feature type="chain" id="PRO_0000293182" description="D-erythrose-4-phosphate dehydrogenase">
    <location>
        <begin position="1"/>
        <end position="338"/>
    </location>
</feature>
<feature type="active site" description="Nucleophile" evidence="1">
    <location>
        <position position="155"/>
    </location>
</feature>
<feature type="binding site" evidence="1">
    <location>
        <begin position="12"/>
        <end position="13"/>
    </location>
    <ligand>
        <name>NAD(+)</name>
        <dbReference type="ChEBI" id="CHEBI:57540"/>
    </ligand>
</feature>
<feature type="binding site" evidence="1">
    <location>
        <begin position="154"/>
        <end position="156"/>
    </location>
    <ligand>
        <name>substrate</name>
    </ligand>
</feature>
<feature type="binding site" evidence="1">
    <location>
        <position position="200"/>
    </location>
    <ligand>
        <name>substrate</name>
    </ligand>
</feature>
<feature type="binding site" evidence="1">
    <location>
        <begin position="213"/>
        <end position="214"/>
    </location>
    <ligand>
        <name>substrate</name>
    </ligand>
</feature>
<feature type="binding site" evidence="1">
    <location>
        <position position="236"/>
    </location>
    <ligand>
        <name>substrate</name>
    </ligand>
</feature>
<feature type="binding site" evidence="1">
    <location>
        <position position="318"/>
    </location>
    <ligand>
        <name>NAD(+)</name>
        <dbReference type="ChEBI" id="CHEBI:57540"/>
    </ligand>
</feature>
<feature type="site" description="Activates thiol group during catalysis" evidence="1">
    <location>
        <position position="182"/>
    </location>
</feature>
<sequence>MAIRIAINGFGRIGRSVLRALYESGRRAEISVVAINELASAEGMAHLLKYDSSHGRFAWDVRQECDSLYVGDDIIRLIHQSEIEQLPWSELGIDVVLDCSGVYGSREDGEAHVASGAKKVLFAHPGGHDLDATVVYGVNHQDLRAEHRIVSNASCTTNCIIPIIQLLDIAYGIESGTVTTIHSSMNDQPVIDAYHQDLRRTRAASQSIIPVDTKLAAGITRIFPKFCDRFEAISVRVPTINVTAIDLSVSVTHPVGVAEVNQLLQKAARGAFRGIVDYTELPLVSMDFNHDPHSAIVDGTQTRVSGQHLIKTLVWCDNEWGFANRMLDTTLAMAKSGF</sequence>
<comment type="function">
    <text evidence="1">Catalyzes the NAD-dependent conversion of D-erythrose 4-phosphate to 4-phosphoerythronate.</text>
</comment>
<comment type="catalytic activity">
    <reaction evidence="1">
        <text>D-erythrose 4-phosphate + NAD(+) + H2O = 4-phospho-D-erythronate + NADH + 2 H(+)</text>
        <dbReference type="Rhea" id="RHEA:12056"/>
        <dbReference type="ChEBI" id="CHEBI:15377"/>
        <dbReference type="ChEBI" id="CHEBI:15378"/>
        <dbReference type="ChEBI" id="CHEBI:16897"/>
        <dbReference type="ChEBI" id="CHEBI:57540"/>
        <dbReference type="ChEBI" id="CHEBI:57945"/>
        <dbReference type="ChEBI" id="CHEBI:58766"/>
        <dbReference type="EC" id="1.2.1.72"/>
    </reaction>
</comment>
<comment type="pathway">
    <text evidence="1">Cofactor biosynthesis; pyridoxine 5'-phosphate biosynthesis; pyridoxine 5'-phosphate from D-erythrose 4-phosphate: step 1/5.</text>
</comment>
<comment type="subunit">
    <text evidence="1">Homotetramer.</text>
</comment>
<comment type="subcellular location">
    <subcellularLocation>
        <location evidence="1">Cytoplasm</location>
    </subcellularLocation>
</comment>
<comment type="similarity">
    <text evidence="1">Belongs to the glyceraldehyde-3-phosphate dehydrogenase family. Epd subfamily.</text>
</comment>
<organism>
    <name type="scientific">Yersinia pseudotuberculosis serotype I (strain IP32953)</name>
    <dbReference type="NCBI Taxonomy" id="273123"/>
    <lineage>
        <taxon>Bacteria</taxon>
        <taxon>Pseudomonadati</taxon>
        <taxon>Pseudomonadota</taxon>
        <taxon>Gammaproteobacteria</taxon>
        <taxon>Enterobacterales</taxon>
        <taxon>Yersiniaceae</taxon>
        <taxon>Yersinia</taxon>
    </lineage>
</organism>
<reference key="1">
    <citation type="journal article" date="2004" name="Proc. Natl. Acad. Sci. U.S.A.">
        <title>Insights into the evolution of Yersinia pestis through whole-genome comparison with Yersinia pseudotuberculosis.</title>
        <authorList>
            <person name="Chain P.S.G."/>
            <person name="Carniel E."/>
            <person name="Larimer F.W."/>
            <person name="Lamerdin J."/>
            <person name="Stoutland P.O."/>
            <person name="Regala W.M."/>
            <person name="Georgescu A.M."/>
            <person name="Vergez L.M."/>
            <person name="Land M.L."/>
            <person name="Motin V.L."/>
            <person name="Brubaker R.R."/>
            <person name="Fowler J."/>
            <person name="Hinnebusch J."/>
            <person name="Marceau M."/>
            <person name="Medigue C."/>
            <person name="Simonet M."/>
            <person name="Chenal-Francisque V."/>
            <person name="Souza B."/>
            <person name="Dacheux D."/>
            <person name="Elliott J.M."/>
            <person name="Derbise A."/>
            <person name="Hauser L.J."/>
            <person name="Garcia E."/>
        </authorList>
    </citation>
    <scope>NUCLEOTIDE SEQUENCE [LARGE SCALE GENOMIC DNA]</scope>
    <source>
        <strain>IP32953</strain>
    </source>
</reference>
<proteinExistence type="inferred from homology"/>
<protein>
    <recommendedName>
        <fullName evidence="1">D-erythrose-4-phosphate dehydrogenase</fullName>
        <shortName evidence="1">E4PDH</shortName>
        <ecNumber evidence="1">1.2.1.72</ecNumber>
    </recommendedName>
</protein>
<evidence type="ECO:0000255" key="1">
    <source>
        <dbReference type="HAMAP-Rule" id="MF_01640"/>
    </source>
</evidence>
<name>E4PD_YERPS</name>